<comment type="function">
    <text evidence="1">Probable E3 ubiquitin-protein ligase that may possess E3 ubiquitin ligase activity in vitro.</text>
</comment>
<comment type="catalytic activity">
    <reaction>
        <text>S-ubiquitinyl-[E2 ubiquitin-conjugating enzyme]-L-cysteine + [acceptor protein]-L-lysine = [E2 ubiquitin-conjugating enzyme]-L-cysteine + N(6)-ubiquitinyl-[acceptor protein]-L-lysine.</text>
        <dbReference type="EC" id="2.3.2.27"/>
    </reaction>
</comment>
<comment type="pathway">
    <text evidence="4">Protein modification; protein ubiquitination.</text>
</comment>
<comment type="alternative products">
    <event type="alternative splicing"/>
    <isoform>
        <id>Q2HIJ8-1</id>
        <name>1</name>
        <sequence type="displayed"/>
    </isoform>
    <text evidence="4">A number of isoforms are produced. According to EST sequences.</text>
</comment>
<proteinExistence type="evidence at transcript level"/>
<evidence type="ECO:0000250" key="1">
    <source>
        <dbReference type="UniProtKB" id="Q9ZT50"/>
    </source>
</evidence>
<evidence type="ECO:0000255" key="2">
    <source>
        <dbReference type="PROSITE-ProRule" id="PRU00175"/>
    </source>
</evidence>
<evidence type="ECO:0000303" key="3">
    <source>
    </source>
</evidence>
<evidence type="ECO:0000305" key="4"/>
<evidence type="ECO:0000312" key="5">
    <source>
        <dbReference type="Araport" id="AT4G00335"/>
    </source>
</evidence>
<name>RHB1A_ARATH</name>
<organism>
    <name type="scientific">Arabidopsis thaliana</name>
    <name type="common">Mouse-ear cress</name>
    <dbReference type="NCBI Taxonomy" id="3702"/>
    <lineage>
        <taxon>Eukaryota</taxon>
        <taxon>Viridiplantae</taxon>
        <taxon>Streptophyta</taxon>
        <taxon>Embryophyta</taxon>
        <taxon>Tracheophyta</taxon>
        <taxon>Spermatophyta</taxon>
        <taxon>Magnoliopsida</taxon>
        <taxon>eudicotyledons</taxon>
        <taxon>Gunneridae</taxon>
        <taxon>Pentapetalae</taxon>
        <taxon>rosids</taxon>
        <taxon>malvids</taxon>
        <taxon>Brassicales</taxon>
        <taxon>Brassicaceae</taxon>
        <taxon>Camelineae</taxon>
        <taxon>Arabidopsis</taxon>
    </lineage>
</organism>
<feature type="chain" id="PRO_0000436414" description="Probable E3 ubiquitin-protein ligase RHB1A">
    <location>
        <begin position="1"/>
        <end position="190"/>
    </location>
</feature>
<feature type="zinc finger region" description="RING-type; atypical" evidence="2">
    <location>
        <begin position="139"/>
        <end position="180"/>
    </location>
</feature>
<feature type="sequence conflict" description="In Ref. 1; AAC69853 and 7; AAM65065." evidence="4" ref="1 7">
    <original>D</original>
    <variation>E</variation>
    <location>
        <position position="137"/>
    </location>
</feature>
<feature type="sequence conflict" description="In Ref. 4; BAC42779." evidence="4" ref="4">
    <original>T</original>
    <variation>A</variation>
    <location>
        <position position="155"/>
    </location>
</feature>
<accession>Q2HIJ8</accession>
<accession>F4JH43</accession>
<accession>Q8GXM5</accession>
<accession>Q9ZT44</accession>
<keyword id="KW-0025">Alternative splicing</keyword>
<keyword id="KW-0479">Metal-binding</keyword>
<keyword id="KW-1185">Reference proteome</keyword>
<keyword id="KW-0808">Transferase</keyword>
<keyword id="KW-0833">Ubl conjugation pathway</keyword>
<keyword id="KW-0862">Zinc</keyword>
<keyword id="KW-0863">Zinc-finger</keyword>
<protein>
    <recommendedName>
        <fullName evidence="4">Probable E3 ubiquitin-protein ligase RHB1A</fullName>
        <ecNumber>2.3.2.27</ecNumber>
    </recommendedName>
    <alternativeName>
        <fullName evidence="3">RING-H2 finger B1a</fullName>
    </alternativeName>
    <alternativeName>
        <fullName evidence="4">RING-H2 zinc finger protein RHB1a</fullName>
    </alternativeName>
    <alternativeName>
        <fullName evidence="4">RING-type E3 ubiquitin transferase RHB1A</fullName>
    </alternativeName>
</protein>
<reference key="1">
    <citation type="journal article" date="1998" name="FEBS Lett.">
        <title>Widespread occurrence of a highly conserved RING-H2 zinc finger motif in the model plant Arabidopsis thaliana.</title>
        <authorList>
            <person name="Jensen R.B."/>
            <person name="Jensen K.L."/>
            <person name="Jespersen H.M."/>
            <person name="Skriver K."/>
        </authorList>
    </citation>
    <scope>NUCLEOTIDE SEQUENCE [MRNA]</scope>
    <source>
        <strain>cv. Columbia</strain>
    </source>
</reference>
<reference key="2">
    <citation type="journal article" date="1999" name="Nature">
        <title>Sequence and analysis of chromosome 4 of the plant Arabidopsis thaliana.</title>
        <authorList>
            <person name="Mayer K.F.X."/>
            <person name="Schueller C."/>
            <person name="Wambutt R."/>
            <person name="Murphy G."/>
            <person name="Volckaert G."/>
            <person name="Pohl T."/>
            <person name="Duesterhoeft A."/>
            <person name="Stiekema W."/>
            <person name="Entian K.-D."/>
            <person name="Terryn N."/>
            <person name="Harris B."/>
            <person name="Ansorge W."/>
            <person name="Brandt P."/>
            <person name="Grivell L.A."/>
            <person name="Rieger M."/>
            <person name="Weichselgartner M."/>
            <person name="de Simone V."/>
            <person name="Obermaier B."/>
            <person name="Mache R."/>
            <person name="Mueller M."/>
            <person name="Kreis M."/>
            <person name="Delseny M."/>
            <person name="Puigdomenech P."/>
            <person name="Watson M."/>
            <person name="Schmidtheini T."/>
            <person name="Reichert B."/>
            <person name="Portetelle D."/>
            <person name="Perez-Alonso M."/>
            <person name="Boutry M."/>
            <person name="Bancroft I."/>
            <person name="Vos P."/>
            <person name="Hoheisel J."/>
            <person name="Zimmermann W."/>
            <person name="Wedler H."/>
            <person name="Ridley P."/>
            <person name="Langham S.-A."/>
            <person name="McCullagh B."/>
            <person name="Bilham L."/>
            <person name="Robben J."/>
            <person name="van der Schueren J."/>
            <person name="Grymonprez B."/>
            <person name="Chuang Y.-J."/>
            <person name="Vandenbussche F."/>
            <person name="Braeken M."/>
            <person name="Weltjens I."/>
            <person name="Voet M."/>
            <person name="Bastiaens I."/>
            <person name="Aert R."/>
            <person name="Defoor E."/>
            <person name="Weitzenegger T."/>
            <person name="Bothe G."/>
            <person name="Ramsperger U."/>
            <person name="Hilbert H."/>
            <person name="Braun M."/>
            <person name="Holzer E."/>
            <person name="Brandt A."/>
            <person name="Peters S."/>
            <person name="van Staveren M."/>
            <person name="Dirkse W."/>
            <person name="Mooijman P."/>
            <person name="Klein Lankhorst R."/>
            <person name="Rose M."/>
            <person name="Hauf J."/>
            <person name="Koetter P."/>
            <person name="Berneiser S."/>
            <person name="Hempel S."/>
            <person name="Feldpausch M."/>
            <person name="Lamberth S."/>
            <person name="Van den Daele H."/>
            <person name="De Keyser A."/>
            <person name="Buysshaert C."/>
            <person name="Gielen J."/>
            <person name="Villarroel R."/>
            <person name="De Clercq R."/>
            <person name="van Montagu M."/>
            <person name="Rogers J."/>
            <person name="Cronin A."/>
            <person name="Quail M.A."/>
            <person name="Bray-Allen S."/>
            <person name="Clark L."/>
            <person name="Doggett J."/>
            <person name="Hall S."/>
            <person name="Kay M."/>
            <person name="Lennard N."/>
            <person name="McLay K."/>
            <person name="Mayes R."/>
            <person name="Pettett A."/>
            <person name="Rajandream M.A."/>
            <person name="Lyne M."/>
            <person name="Benes V."/>
            <person name="Rechmann S."/>
            <person name="Borkova D."/>
            <person name="Bloecker H."/>
            <person name="Scharfe M."/>
            <person name="Grimm M."/>
            <person name="Loehnert T.-H."/>
            <person name="Dose S."/>
            <person name="de Haan M."/>
            <person name="Maarse A.C."/>
            <person name="Schaefer M."/>
            <person name="Mueller-Auer S."/>
            <person name="Gabel C."/>
            <person name="Fuchs M."/>
            <person name="Fartmann B."/>
            <person name="Granderath K."/>
            <person name="Dauner D."/>
            <person name="Herzl A."/>
            <person name="Neumann S."/>
            <person name="Argiriou A."/>
            <person name="Vitale D."/>
            <person name="Liguori R."/>
            <person name="Piravandi E."/>
            <person name="Massenet O."/>
            <person name="Quigley F."/>
            <person name="Clabauld G."/>
            <person name="Muendlein A."/>
            <person name="Felber R."/>
            <person name="Schnabl S."/>
            <person name="Hiller R."/>
            <person name="Schmidt W."/>
            <person name="Lecharny A."/>
            <person name="Aubourg S."/>
            <person name="Chefdor F."/>
            <person name="Cooke R."/>
            <person name="Berger C."/>
            <person name="Monfort A."/>
            <person name="Casacuberta E."/>
            <person name="Gibbons T."/>
            <person name="Weber N."/>
            <person name="Vandenbol M."/>
            <person name="Bargues M."/>
            <person name="Terol J."/>
            <person name="Torres A."/>
            <person name="Perez-Perez A."/>
            <person name="Purnelle B."/>
            <person name="Bent E."/>
            <person name="Johnson S."/>
            <person name="Tacon D."/>
            <person name="Jesse T."/>
            <person name="Heijnen L."/>
            <person name="Schwarz S."/>
            <person name="Scholler P."/>
            <person name="Heber S."/>
            <person name="Francs P."/>
            <person name="Bielke C."/>
            <person name="Frishman D."/>
            <person name="Haase D."/>
            <person name="Lemcke K."/>
            <person name="Mewes H.-W."/>
            <person name="Stocker S."/>
            <person name="Zaccaria P."/>
            <person name="Bevan M."/>
            <person name="Wilson R.K."/>
            <person name="de la Bastide M."/>
            <person name="Habermann K."/>
            <person name="Parnell L."/>
            <person name="Dedhia N."/>
            <person name="Gnoj L."/>
            <person name="Schutz K."/>
            <person name="Huang E."/>
            <person name="Spiegel L."/>
            <person name="Sekhon M."/>
            <person name="Murray J."/>
            <person name="Sheet P."/>
            <person name="Cordes M."/>
            <person name="Abu-Threideh J."/>
            <person name="Stoneking T."/>
            <person name="Kalicki J."/>
            <person name="Graves T."/>
            <person name="Harmon G."/>
            <person name="Edwards J."/>
            <person name="Latreille P."/>
            <person name="Courtney L."/>
            <person name="Cloud J."/>
            <person name="Abbott A."/>
            <person name="Scott K."/>
            <person name="Johnson D."/>
            <person name="Minx P."/>
            <person name="Bentley D."/>
            <person name="Fulton B."/>
            <person name="Miller N."/>
            <person name="Greco T."/>
            <person name="Kemp K."/>
            <person name="Kramer J."/>
            <person name="Fulton L."/>
            <person name="Mardis E."/>
            <person name="Dante M."/>
            <person name="Pepin K."/>
            <person name="Hillier L.W."/>
            <person name="Nelson J."/>
            <person name="Spieth J."/>
            <person name="Ryan E."/>
            <person name="Andrews S."/>
            <person name="Geisel C."/>
            <person name="Layman D."/>
            <person name="Du H."/>
            <person name="Ali J."/>
            <person name="Berghoff A."/>
            <person name="Jones K."/>
            <person name="Drone K."/>
            <person name="Cotton M."/>
            <person name="Joshu C."/>
            <person name="Antonoiu B."/>
            <person name="Zidanic M."/>
            <person name="Strong C."/>
            <person name="Sun H."/>
            <person name="Lamar B."/>
            <person name="Yordan C."/>
            <person name="Ma P."/>
            <person name="Zhong J."/>
            <person name="Preston R."/>
            <person name="Vil D."/>
            <person name="Shekher M."/>
            <person name="Matero A."/>
            <person name="Shah R."/>
            <person name="Swaby I.K."/>
            <person name="O'Shaughnessy A."/>
            <person name="Rodriguez M."/>
            <person name="Hoffman J."/>
            <person name="Till S."/>
            <person name="Granat S."/>
            <person name="Shohdy N."/>
            <person name="Hasegawa A."/>
            <person name="Hameed A."/>
            <person name="Lodhi M."/>
            <person name="Johnson A."/>
            <person name="Chen E."/>
            <person name="Marra M.A."/>
            <person name="Martienssen R."/>
            <person name="McCombie W.R."/>
        </authorList>
    </citation>
    <scope>NUCLEOTIDE SEQUENCE [LARGE SCALE GENOMIC DNA]</scope>
    <source>
        <strain>cv. Columbia</strain>
    </source>
</reference>
<reference key="3">
    <citation type="journal article" date="2017" name="Plant J.">
        <title>Araport11: a complete reannotation of the Arabidopsis thaliana reference genome.</title>
        <authorList>
            <person name="Cheng C.Y."/>
            <person name="Krishnakumar V."/>
            <person name="Chan A.P."/>
            <person name="Thibaud-Nissen F."/>
            <person name="Schobel S."/>
            <person name="Town C.D."/>
        </authorList>
    </citation>
    <scope>GENOME REANNOTATION</scope>
    <source>
        <strain>cv. Columbia</strain>
    </source>
</reference>
<reference key="4">
    <citation type="journal article" date="2002" name="Science">
        <title>Functional annotation of a full-length Arabidopsis cDNA collection.</title>
        <authorList>
            <person name="Seki M."/>
            <person name="Narusaka M."/>
            <person name="Kamiya A."/>
            <person name="Ishida J."/>
            <person name="Satou M."/>
            <person name="Sakurai T."/>
            <person name="Nakajima M."/>
            <person name="Enju A."/>
            <person name="Akiyama K."/>
            <person name="Oono Y."/>
            <person name="Muramatsu M."/>
            <person name="Hayashizaki Y."/>
            <person name="Kawai J."/>
            <person name="Carninci P."/>
            <person name="Itoh M."/>
            <person name="Ishii Y."/>
            <person name="Arakawa T."/>
            <person name="Shibata K."/>
            <person name="Shinagawa A."/>
            <person name="Shinozaki K."/>
        </authorList>
    </citation>
    <scope>NUCLEOTIDE SEQUENCE [LARGE SCALE MRNA]</scope>
    <source>
        <strain>cv. Columbia</strain>
    </source>
</reference>
<reference key="5">
    <citation type="submission" date="2006-02" db="EMBL/GenBank/DDBJ databases">
        <title>Arabidopsis ORF clones.</title>
        <authorList>
            <person name="Shinn P."/>
            <person name="Chen H."/>
            <person name="Kim C.J."/>
            <person name="Ecker J.R."/>
        </authorList>
    </citation>
    <scope>NUCLEOTIDE SEQUENCE [LARGE SCALE MRNA]</scope>
    <source>
        <strain>cv. Columbia</strain>
    </source>
</reference>
<reference key="6">
    <citation type="submission" date="2006-07" db="EMBL/GenBank/DDBJ databases">
        <title>Large-scale analysis of RIKEN Arabidopsis full-length (RAFL) cDNAs.</title>
        <authorList>
            <person name="Totoki Y."/>
            <person name="Seki M."/>
            <person name="Ishida J."/>
            <person name="Nakajima M."/>
            <person name="Enju A."/>
            <person name="Kamiya A."/>
            <person name="Narusaka M."/>
            <person name="Shin-i T."/>
            <person name="Nakagawa M."/>
            <person name="Sakamoto N."/>
            <person name="Oishi K."/>
            <person name="Kohara Y."/>
            <person name="Kobayashi M."/>
            <person name="Toyoda A."/>
            <person name="Sakaki Y."/>
            <person name="Sakurai T."/>
            <person name="Iida K."/>
            <person name="Akiyama K."/>
            <person name="Satou M."/>
            <person name="Toyoda T."/>
            <person name="Konagaya A."/>
            <person name="Carninci P."/>
            <person name="Kawai J."/>
            <person name="Hayashizaki Y."/>
            <person name="Shinozaki K."/>
        </authorList>
    </citation>
    <scope>NUCLEOTIDE SEQUENCE [LARGE SCALE MRNA]</scope>
    <source>
        <strain>cv. Columbia</strain>
    </source>
</reference>
<reference key="7">
    <citation type="submission" date="2002-03" db="EMBL/GenBank/DDBJ databases">
        <title>Full-length cDNA from Arabidopsis thaliana.</title>
        <authorList>
            <person name="Brover V.V."/>
            <person name="Troukhan M.E."/>
            <person name="Alexandrov N.A."/>
            <person name="Lu Y.-P."/>
            <person name="Flavell R.B."/>
            <person name="Feldmann K.A."/>
        </authorList>
    </citation>
    <scope>NUCLEOTIDE SEQUENCE [LARGE SCALE MRNA]</scope>
</reference>
<gene>
    <name evidence="3" type="primary">RHB1A</name>
    <name evidence="5" type="ordered locus">At4g00335</name>
</gene>
<dbReference type="EC" id="2.3.2.27"/>
<dbReference type="EMBL" id="AF079179">
    <property type="protein sequence ID" value="AAC69853.1"/>
    <property type="molecule type" value="mRNA"/>
</dbReference>
<dbReference type="EMBL" id="AF195115">
    <property type="status" value="NOT_ANNOTATED_CDS"/>
    <property type="molecule type" value="Genomic_DNA"/>
</dbReference>
<dbReference type="EMBL" id="CP002687">
    <property type="protein sequence ID" value="AEE81859.1"/>
    <property type="molecule type" value="Genomic_DNA"/>
</dbReference>
<dbReference type="EMBL" id="CP002687">
    <property type="protein sequence ID" value="AEE81860.1"/>
    <property type="molecule type" value="Genomic_DNA"/>
</dbReference>
<dbReference type="EMBL" id="CP002687">
    <property type="protein sequence ID" value="AEE81861.2"/>
    <property type="molecule type" value="Genomic_DNA"/>
</dbReference>
<dbReference type="EMBL" id="AK118155">
    <property type="protein sequence ID" value="BAC42779.2"/>
    <property type="molecule type" value="mRNA"/>
</dbReference>
<dbReference type="EMBL" id="BT024583">
    <property type="protein sequence ID" value="ABD42981.1"/>
    <property type="molecule type" value="mRNA"/>
</dbReference>
<dbReference type="EMBL" id="AK228408">
    <property type="protein sequence ID" value="BAF00342.1"/>
    <property type="molecule type" value="mRNA"/>
</dbReference>
<dbReference type="EMBL" id="AY087523">
    <property type="protein sequence ID" value="AAM65065.1"/>
    <property type="molecule type" value="mRNA"/>
</dbReference>
<dbReference type="PIR" id="T51851">
    <property type="entry name" value="T51851"/>
</dbReference>
<dbReference type="RefSeq" id="NP_001319828.1">
    <molecule id="Q2HIJ8-1"/>
    <property type="nucleotide sequence ID" value="NM_001340240.1"/>
</dbReference>
<dbReference type="RefSeq" id="NP_567171.1">
    <molecule id="Q2HIJ8-1"/>
    <property type="nucleotide sequence ID" value="NM_116256.4"/>
</dbReference>
<dbReference type="RefSeq" id="NP_974488.1">
    <molecule id="Q2HIJ8-1"/>
    <property type="nucleotide sequence ID" value="NM_202759.2"/>
</dbReference>
<dbReference type="SMR" id="Q2HIJ8"/>
<dbReference type="FunCoup" id="Q2HIJ8">
    <property type="interactions" value="115"/>
</dbReference>
<dbReference type="STRING" id="3702.Q2HIJ8"/>
<dbReference type="iPTMnet" id="Q2HIJ8"/>
<dbReference type="PaxDb" id="3702-AT4G00335.1"/>
<dbReference type="EnsemblPlants" id="AT4G00335.1">
    <molecule id="Q2HIJ8-1"/>
    <property type="protein sequence ID" value="AT4G00335.1"/>
    <property type="gene ID" value="AT4G00335"/>
</dbReference>
<dbReference type="EnsemblPlants" id="AT4G00335.2">
    <molecule id="Q2HIJ8-1"/>
    <property type="protein sequence ID" value="AT4G00335.2"/>
    <property type="gene ID" value="AT4G00335"/>
</dbReference>
<dbReference type="EnsemblPlants" id="AT4G00335.3">
    <molecule id="Q2HIJ8-1"/>
    <property type="protein sequence ID" value="AT4G00335.3"/>
    <property type="gene ID" value="AT4G00335"/>
</dbReference>
<dbReference type="GeneID" id="828093"/>
<dbReference type="Gramene" id="AT4G00335.1">
    <molecule id="Q2HIJ8-1"/>
    <property type="protein sequence ID" value="AT4G00335.1"/>
    <property type="gene ID" value="AT4G00335"/>
</dbReference>
<dbReference type="Gramene" id="AT4G00335.2">
    <molecule id="Q2HIJ8-1"/>
    <property type="protein sequence ID" value="AT4G00335.2"/>
    <property type="gene ID" value="AT4G00335"/>
</dbReference>
<dbReference type="Gramene" id="AT4G00335.3">
    <molecule id="Q2HIJ8-1"/>
    <property type="protein sequence ID" value="AT4G00335.3"/>
    <property type="gene ID" value="AT4G00335"/>
</dbReference>
<dbReference type="KEGG" id="ath:AT4G00335"/>
<dbReference type="Araport" id="AT4G00335"/>
<dbReference type="TAIR" id="AT4G00335">
    <property type="gene designation" value="RHB1A"/>
</dbReference>
<dbReference type="eggNOG" id="KOG0800">
    <property type="taxonomic scope" value="Eukaryota"/>
</dbReference>
<dbReference type="InParanoid" id="Q2HIJ8"/>
<dbReference type="OMA" id="DTFCAPA"/>
<dbReference type="PhylomeDB" id="Q2HIJ8"/>
<dbReference type="UniPathway" id="UPA00143"/>
<dbReference type="PRO" id="PR:Q2HIJ8"/>
<dbReference type="Proteomes" id="UP000006548">
    <property type="component" value="Chromosome 4"/>
</dbReference>
<dbReference type="ExpressionAtlas" id="Q2HIJ8">
    <property type="expression patterns" value="baseline and differential"/>
</dbReference>
<dbReference type="GO" id="GO:0016740">
    <property type="term" value="F:transferase activity"/>
    <property type="evidence" value="ECO:0007669"/>
    <property type="project" value="UniProtKB-KW"/>
</dbReference>
<dbReference type="GO" id="GO:0008270">
    <property type="term" value="F:zinc ion binding"/>
    <property type="evidence" value="ECO:0007669"/>
    <property type="project" value="UniProtKB-KW"/>
</dbReference>
<dbReference type="GO" id="GO:0016567">
    <property type="term" value="P:protein ubiquitination"/>
    <property type="evidence" value="ECO:0007669"/>
    <property type="project" value="UniProtKB-UniPathway"/>
</dbReference>
<dbReference type="CDD" id="cd23116">
    <property type="entry name" value="RING-H2_AIRP1-like"/>
    <property type="match status" value="1"/>
</dbReference>
<dbReference type="FunFam" id="3.30.40.10:FF:000959">
    <property type="entry name" value="E3 ubiquitin-protein ligase"/>
    <property type="match status" value="1"/>
</dbReference>
<dbReference type="Gene3D" id="3.30.40.10">
    <property type="entry name" value="Zinc/RING finger domain, C3HC4 (zinc finger)"/>
    <property type="match status" value="1"/>
</dbReference>
<dbReference type="InterPro" id="IPR001841">
    <property type="entry name" value="Znf_RING"/>
</dbReference>
<dbReference type="InterPro" id="IPR013083">
    <property type="entry name" value="Znf_RING/FYVE/PHD"/>
</dbReference>
<dbReference type="PANTHER" id="PTHR46463:SF89">
    <property type="entry name" value="E3 UBIQUITIN-PROTEIN LIGASE RHB1A-RELATED"/>
    <property type="match status" value="1"/>
</dbReference>
<dbReference type="PANTHER" id="PTHR46463">
    <property type="entry name" value="ZINC FINGER, RING/FYVE/PHD-TYPE"/>
    <property type="match status" value="1"/>
</dbReference>
<dbReference type="Pfam" id="PF13639">
    <property type="entry name" value="zf-RING_2"/>
    <property type="match status" value="1"/>
</dbReference>
<dbReference type="SMART" id="SM00184">
    <property type="entry name" value="RING"/>
    <property type="match status" value="1"/>
</dbReference>
<dbReference type="SUPFAM" id="SSF57850">
    <property type="entry name" value="RING/U-box"/>
    <property type="match status" value="1"/>
</dbReference>
<dbReference type="PROSITE" id="PS50089">
    <property type="entry name" value="ZF_RING_2"/>
    <property type="match status" value="1"/>
</dbReference>
<sequence length="190" mass="20954">MGGCCSSSRKSHLVGTPVYYYCPESFEELVPSGTRAGVGSAFTTGLLVDIGLETSIPDTFCAPAPLPYDLLLGRPQCTDSESIKGRMSGSSFETLATCEDLGESDCKTLASSVILSPRKSDFSKHQGLKILVDEEEDCCPICFEDYDVENPRLTTKCEHEFHLSCLLEWIERSDRCPICDKEVVFDDRLN</sequence>